<dbReference type="EMBL" id="AK147653">
    <property type="protein sequence ID" value="BAE28051.1"/>
    <property type="molecule type" value="mRNA"/>
</dbReference>
<dbReference type="EMBL" id="AK154980">
    <property type="protein sequence ID" value="BAE32969.1"/>
    <property type="molecule type" value="mRNA"/>
</dbReference>
<dbReference type="EMBL" id="AK171375">
    <property type="protein sequence ID" value="BAE42417.1"/>
    <property type="molecule type" value="mRNA"/>
</dbReference>
<dbReference type="EMBL" id="CT010477">
    <property type="status" value="NOT_ANNOTATED_CDS"/>
    <property type="molecule type" value="Genomic_DNA"/>
</dbReference>
<dbReference type="EMBL" id="BC080680">
    <property type="protein sequence ID" value="AAH80680.1"/>
    <property type="molecule type" value="mRNA"/>
</dbReference>
<dbReference type="EMBL" id="AY946044">
    <property type="protein sequence ID" value="AAX83010.1"/>
    <property type="molecule type" value="mRNA"/>
</dbReference>
<dbReference type="CCDS" id="CCDS36634.1">
    <molecule id="Q3UH06-4"/>
</dbReference>
<dbReference type="CCDS" id="CCDS49238.1">
    <molecule id="Q3UH06-3"/>
</dbReference>
<dbReference type="RefSeq" id="NP_001034277.1">
    <molecule id="Q3UH06-4"/>
    <property type="nucleotide sequence ID" value="NM_001039188.2"/>
</dbReference>
<dbReference type="RefSeq" id="NP_001171339.1">
    <molecule id="Q3UH06-4"/>
    <property type="nucleotide sequence ID" value="NM_001177868.2"/>
</dbReference>
<dbReference type="RefSeq" id="NP_001171340.1">
    <molecule id="Q3UH06-3"/>
    <property type="nucleotide sequence ID" value="NM_001177869.2"/>
</dbReference>
<dbReference type="RefSeq" id="NP_001391686.1">
    <molecule id="Q3UH06-1"/>
    <property type="nucleotide sequence ID" value="NM_001404757.1"/>
</dbReference>
<dbReference type="RefSeq" id="NP_001391687.1">
    <molecule id="Q3UH06-1"/>
    <property type="nucleotide sequence ID" value="NM_001404758.1"/>
</dbReference>
<dbReference type="RefSeq" id="NP_081106.1">
    <molecule id="Q3UH06-4"/>
    <property type="nucleotide sequence ID" value="NM_026830.3"/>
</dbReference>
<dbReference type="RefSeq" id="XP_006516812.1">
    <molecule id="Q3UH06-3"/>
    <property type="nucleotide sequence ID" value="XM_006516749.3"/>
</dbReference>
<dbReference type="RefSeq" id="XP_006516813.1">
    <property type="nucleotide sequence ID" value="XM_006516750.2"/>
</dbReference>
<dbReference type="RefSeq" id="XP_006516814.1">
    <molecule id="Q3UH06-3"/>
    <property type="nucleotide sequence ID" value="XM_006516751.4"/>
</dbReference>
<dbReference type="RefSeq" id="XP_006516815.1">
    <molecule id="Q3UH06-3"/>
    <property type="nucleotide sequence ID" value="XM_006516752.3"/>
</dbReference>
<dbReference type="RefSeq" id="XP_006516816.1">
    <molecule id="Q3UH06-3"/>
    <property type="nucleotide sequence ID" value="XM_006516753.5"/>
</dbReference>
<dbReference type="RefSeq" id="XP_006516817.1">
    <molecule id="Q3UH06-3"/>
    <property type="nucleotide sequence ID" value="XM_006516754.5"/>
</dbReference>
<dbReference type="RefSeq" id="XP_006516819.1">
    <molecule id="Q3UH06-3"/>
    <property type="nucleotide sequence ID" value="XM_006516756.4"/>
</dbReference>
<dbReference type="RefSeq" id="XP_006516820.1">
    <molecule id="Q3UH06-3"/>
    <property type="nucleotide sequence ID" value="XM_006516757.5"/>
</dbReference>
<dbReference type="RefSeq" id="XP_006516822.1">
    <property type="nucleotide sequence ID" value="XM_006516759.1"/>
</dbReference>
<dbReference type="BioGRID" id="213031">
    <property type="interactions" value="9"/>
</dbReference>
<dbReference type="FunCoup" id="Q3UH06">
    <property type="interactions" value="2909"/>
</dbReference>
<dbReference type="STRING" id="10090.ENSMUSP00000115599"/>
<dbReference type="GlyGen" id="Q3UH06">
    <property type="glycosylation" value="7 sites, 1 O-linked glycan (4 sites)"/>
</dbReference>
<dbReference type="iPTMnet" id="Q3UH06"/>
<dbReference type="PhosphoSitePlus" id="Q3UH06"/>
<dbReference type="SwissPalm" id="Q3UH06"/>
<dbReference type="jPOST" id="Q3UH06"/>
<dbReference type="PaxDb" id="10090-ENSMUSP00000105867"/>
<dbReference type="PeptideAtlas" id="Q3UH06"/>
<dbReference type="ProteomicsDB" id="260838">
    <molecule id="Q3UH06-1"/>
</dbReference>
<dbReference type="ProteomicsDB" id="260839">
    <molecule id="Q3UH06-2"/>
</dbReference>
<dbReference type="ProteomicsDB" id="260840">
    <molecule id="Q3UH06-3"/>
</dbReference>
<dbReference type="ProteomicsDB" id="260841">
    <molecule id="Q3UH06-4"/>
</dbReference>
<dbReference type="Pumba" id="Q3UH06"/>
<dbReference type="Antibodypedia" id="9691">
    <property type="antibodies" value="198 antibodies from 32 providers"/>
</dbReference>
<dbReference type="DNASU" id="68750"/>
<dbReference type="Ensembl" id="ENSMUST00000037232.8">
    <molecule id="Q3UH06-3"/>
    <property type="protein sequence ID" value="ENSMUSP00000049265.8"/>
    <property type="gene ID" value="ENSMUSG00000039087.18"/>
</dbReference>
<dbReference type="Ensembl" id="ENSMUST00000110237.9">
    <molecule id="Q3UH06-4"/>
    <property type="protein sequence ID" value="ENSMUSP00000105866.3"/>
    <property type="gene ID" value="ENSMUSG00000039087.18"/>
</dbReference>
<dbReference type="Ensembl" id="ENSMUST00000110238.10">
    <molecule id="Q3UH06-4"/>
    <property type="protein sequence ID" value="ENSMUSP00000105867.3"/>
    <property type="gene ID" value="ENSMUSG00000039087.18"/>
</dbReference>
<dbReference type="Ensembl" id="ENSMUST00000128570.9">
    <molecule id="Q3UH06-3"/>
    <property type="protein sequence ID" value="ENSMUSP00000115599.2"/>
    <property type="gene ID" value="ENSMUSG00000039087.18"/>
</dbReference>
<dbReference type="Ensembl" id="ENSMUST00000149745.8">
    <molecule id="Q3UH06-4"/>
    <property type="protein sequence ID" value="ENSMUSP00000121211.2"/>
    <property type="gene ID" value="ENSMUSG00000039087.18"/>
</dbReference>
<dbReference type="GeneID" id="68750"/>
<dbReference type="KEGG" id="mmu:68750"/>
<dbReference type="UCSC" id="uc007qcw.2">
    <molecule id="Q3UH06-4"/>
    <property type="organism name" value="mouse"/>
</dbReference>
<dbReference type="UCSC" id="uc007qda.2">
    <molecule id="Q3UH06-1"/>
    <property type="organism name" value="mouse"/>
</dbReference>
<dbReference type="UCSC" id="uc007qdb.2">
    <molecule id="Q3UH06-3"/>
    <property type="organism name" value="mouse"/>
</dbReference>
<dbReference type="AGR" id="MGI:2443664"/>
<dbReference type="CTD" id="6239"/>
<dbReference type="MGI" id="MGI:2443664">
    <property type="gene designation" value="Rreb1"/>
</dbReference>
<dbReference type="VEuPathDB" id="HostDB:ENSMUSG00000039087"/>
<dbReference type="eggNOG" id="KOG1721">
    <property type="taxonomic scope" value="Eukaryota"/>
</dbReference>
<dbReference type="GeneTree" id="ENSGT00940000157533"/>
<dbReference type="HOGENOM" id="CLU_002702_0_0_1"/>
<dbReference type="InParanoid" id="Q3UH06"/>
<dbReference type="OMA" id="DAPDQKV"/>
<dbReference type="OrthoDB" id="78900at9989"/>
<dbReference type="PhylomeDB" id="Q3UH06"/>
<dbReference type="TreeFam" id="TF332503"/>
<dbReference type="BioGRID-ORCS" id="68750">
    <property type="hits" value="5 hits in 79 CRISPR screens"/>
</dbReference>
<dbReference type="ChiTaRS" id="Rreb1">
    <property type="organism name" value="mouse"/>
</dbReference>
<dbReference type="PRO" id="PR:Q3UH06"/>
<dbReference type="Proteomes" id="UP000000589">
    <property type="component" value="Chromosome 13"/>
</dbReference>
<dbReference type="RNAct" id="Q3UH06">
    <property type="molecule type" value="protein"/>
</dbReference>
<dbReference type="Bgee" id="ENSMUSG00000039087">
    <property type="expression patterns" value="Expressed in left lung lobe and 268 other cell types or tissues"/>
</dbReference>
<dbReference type="ExpressionAtlas" id="Q3UH06">
    <property type="expression patterns" value="baseline and differential"/>
</dbReference>
<dbReference type="GO" id="GO:0001650">
    <property type="term" value="C:fibrillar center"/>
    <property type="evidence" value="ECO:0007669"/>
    <property type="project" value="Ensembl"/>
</dbReference>
<dbReference type="GO" id="GO:0016607">
    <property type="term" value="C:nuclear speck"/>
    <property type="evidence" value="ECO:0007669"/>
    <property type="project" value="UniProtKB-SubCell"/>
</dbReference>
<dbReference type="GO" id="GO:0001228">
    <property type="term" value="F:DNA-binding transcription activator activity, RNA polymerase II-specific"/>
    <property type="evidence" value="ECO:0007669"/>
    <property type="project" value="Ensembl"/>
</dbReference>
<dbReference type="GO" id="GO:0003700">
    <property type="term" value="F:DNA-binding transcription factor activity"/>
    <property type="evidence" value="ECO:0000314"/>
    <property type="project" value="MGI"/>
</dbReference>
<dbReference type="GO" id="GO:0000978">
    <property type="term" value="F:RNA polymerase II cis-regulatory region sequence-specific DNA binding"/>
    <property type="evidence" value="ECO:0007669"/>
    <property type="project" value="Ensembl"/>
</dbReference>
<dbReference type="GO" id="GO:0008270">
    <property type="term" value="F:zinc ion binding"/>
    <property type="evidence" value="ECO:0007669"/>
    <property type="project" value="UniProtKB-KW"/>
</dbReference>
<dbReference type="GO" id="GO:0045892">
    <property type="term" value="P:negative regulation of DNA-templated transcription"/>
    <property type="evidence" value="ECO:0000314"/>
    <property type="project" value="MGI"/>
</dbReference>
<dbReference type="GO" id="GO:0000122">
    <property type="term" value="P:negative regulation of transcription by RNA polymerase II"/>
    <property type="evidence" value="ECO:0000315"/>
    <property type="project" value="UniProtKB"/>
</dbReference>
<dbReference type="GO" id="GO:0090336">
    <property type="term" value="P:positive regulation of brown fat cell differentiation"/>
    <property type="evidence" value="ECO:0000315"/>
    <property type="project" value="UniProtKB"/>
</dbReference>
<dbReference type="GO" id="GO:0010634">
    <property type="term" value="P:positive regulation of epithelial cell migration"/>
    <property type="evidence" value="ECO:0007669"/>
    <property type="project" value="Ensembl"/>
</dbReference>
<dbReference type="GO" id="GO:2000394">
    <property type="term" value="P:positive regulation of lamellipodium morphogenesis"/>
    <property type="evidence" value="ECO:0007669"/>
    <property type="project" value="Ensembl"/>
</dbReference>
<dbReference type="GO" id="GO:0033601">
    <property type="term" value="P:positive regulation of mammary gland epithelial cell proliferation"/>
    <property type="evidence" value="ECO:0007669"/>
    <property type="project" value="Ensembl"/>
</dbReference>
<dbReference type="GO" id="GO:1900026">
    <property type="term" value="P:positive regulation of substrate adhesion-dependent cell spreading"/>
    <property type="evidence" value="ECO:0007669"/>
    <property type="project" value="Ensembl"/>
</dbReference>
<dbReference type="GO" id="GO:1903691">
    <property type="term" value="P:positive regulation of wound healing, spreading of epidermal cells"/>
    <property type="evidence" value="ECO:0007669"/>
    <property type="project" value="Ensembl"/>
</dbReference>
<dbReference type="FunFam" id="3.30.160.60:FF:001098">
    <property type="entry name" value="Ras responsive element binding protein 1"/>
    <property type="match status" value="1"/>
</dbReference>
<dbReference type="FunFam" id="3.30.160.60:FF:001835">
    <property type="entry name" value="Ras responsive element binding protein 1"/>
    <property type="match status" value="1"/>
</dbReference>
<dbReference type="FunFam" id="3.30.160.60:FF:002587">
    <property type="entry name" value="Ras responsive element binding protein 1"/>
    <property type="match status" value="1"/>
</dbReference>
<dbReference type="FunFam" id="3.30.160.60:FF:002036">
    <property type="entry name" value="Ras-responsive element-binding protein 1"/>
    <property type="match status" value="1"/>
</dbReference>
<dbReference type="FunFam" id="3.30.160.60:FF:001788">
    <property type="entry name" value="ras-responsive element-binding protein 1"/>
    <property type="match status" value="1"/>
</dbReference>
<dbReference type="FunFam" id="3.30.160.60:FF:000599">
    <property type="entry name" value="ras-responsive element-binding protein 1 isoform X1"/>
    <property type="match status" value="1"/>
</dbReference>
<dbReference type="FunFam" id="3.30.160.60:FF:000682">
    <property type="entry name" value="ras-responsive element-binding protein 1 isoform X1"/>
    <property type="match status" value="1"/>
</dbReference>
<dbReference type="FunFam" id="3.30.160.60:FF:001594">
    <property type="entry name" value="ras-responsive element-binding protein 1 isoform X1"/>
    <property type="match status" value="1"/>
</dbReference>
<dbReference type="FunFam" id="3.30.160.60:FF:000507">
    <property type="entry name" value="ras-responsive element-binding protein 1 isoform X2"/>
    <property type="match status" value="1"/>
</dbReference>
<dbReference type="FunFam" id="3.30.160.60:FF:003785">
    <property type="entry name" value="Ras-responsive element-binding protein 1b"/>
    <property type="match status" value="1"/>
</dbReference>
<dbReference type="Gene3D" id="3.30.160.60">
    <property type="entry name" value="Classic Zinc Finger"/>
    <property type="match status" value="8"/>
</dbReference>
<dbReference type="InterPro" id="IPR052795">
    <property type="entry name" value="RREB1"/>
</dbReference>
<dbReference type="InterPro" id="IPR036236">
    <property type="entry name" value="Znf_C2H2_sf"/>
</dbReference>
<dbReference type="InterPro" id="IPR013087">
    <property type="entry name" value="Znf_C2H2_type"/>
</dbReference>
<dbReference type="PANTHER" id="PTHR46451">
    <property type="entry name" value="RAS-RESPONSIVE ELEMENT-BINDING PROTEIN 1"/>
    <property type="match status" value="1"/>
</dbReference>
<dbReference type="PANTHER" id="PTHR46451:SF1">
    <property type="entry name" value="RAS-RESPONSIVE ELEMENT-BINDING PROTEIN 1"/>
    <property type="match status" value="1"/>
</dbReference>
<dbReference type="Pfam" id="PF00096">
    <property type="entry name" value="zf-C2H2"/>
    <property type="match status" value="6"/>
</dbReference>
<dbReference type="Pfam" id="PF13894">
    <property type="entry name" value="zf-C2H2_4"/>
    <property type="match status" value="1"/>
</dbReference>
<dbReference type="Pfam" id="PF13912">
    <property type="entry name" value="zf-C2H2_6"/>
    <property type="match status" value="2"/>
</dbReference>
<dbReference type="SMART" id="SM00355">
    <property type="entry name" value="ZnF_C2H2"/>
    <property type="match status" value="15"/>
</dbReference>
<dbReference type="SUPFAM" id="SSF57667">
    <property type="entry name" value="beta-beta-alpha zinc fingers"/>
    <property type="match status" value="8"/>
</dbReference>
<dbReference type="PROSITE" id="PS00028">
    <property type="entry name" value="ZINC_FINGER_C2H2_1"/>
    <property type="match status" value="14"/>
</dbReference>
<dbReference type="PROSITE" id="PS50157">
    <property type="entry name" value="ZINC_FINGER_C2H2_2"/>
    <property type="match status" value="14"/>
</dbReference>
<reference key="1">
    <citation type="journal article" date="2005" name="Science">
        <title>The transcriptional landscape of the mammalian genome.</title>
        <authorList>
            <person name="Carninci P."/>
            <person name="Kasukawa T."/>
            <person name="Katayama S."/>
            <person name="Gough J."/>
            <person name="Frith M.C."/>
            <person name="Maeda N."/>
            <person name="Oyama R."/>
            <person name="Ravasi T."/>
            <person name="Lenhard B."/>
            <person name="Wells C."/>
            <person name="Kodzius R."/>
            <person name="Shimokawa K."/>
            <person name="Bajic V.B."/>
            <person name="Brenner S.E."/>
            <person name="Batalov S."/>
            <person name="Forrest A.R."/>
            <person name="Zavolan M."/>
            <person name="Davis M.J."/>
            <person name="Wilming L.G."/>
            <person name="Aidinis V."/>
            <person name="Allen J.E."/>
            <person name="Ambesi-Impiombato A."/>
            <person name="Apweiler R."/>
            <person name="Aturaliya R.N."/>
            <person name="Bailey T.L."/>
            <person name="Bansal M."/>
            <person name="Baxter L."/>
            <person name="Beisel K.W."/>
            <person name="Bersano T."/>
            <person name="Bono H."/>
            <person name="Chalk A.M."/>
            <person name="Chiu K.P."/>
            <person name="Choudhary V."/>
            <person name="Christoffels A."/>
            <person name="Clutterbuck D.R."/>
            <person name="Crowe M.L."/>
            <person name="Dalla E."/>
            <person name="Dalrymple B.P."/>
            <person name="de Bono B."/>
            <person name="Della Gatta G."/>
            <person name="di Bernardo D."/>
            <person name="Down T."/>
            <person name="Engstrom P."/>
            <person name="Fagiolini M."/>
            <person name="Faulkner G."/>
            <person name="Fletcher C.F."/>
            <person name="Fukushima T."/>
            <person name="Furuno M."/>
            <person name="Futaki S."/>
            <person name="Gariboldi M."/>
            <person name="Georgii-Hemming P."/>
            <person name="Gingeras T.R."/>
            <person name="Gojobori T."/>
            <person name="Green R.E."/>
            <person name="Gustincich S."/>
            <person name="Harbers M."/>
            <person name="Hayashi Y."/>
            <person name="Hensch T.K."/>
            <person name="Hirokawa N."/>
            <person name="Hill D."/>
            <person name="Huminiecki L."/>
            <person name="Iacono M."/>
            <person name="Ikeo K."/>
            <person name="Iwama A."/>
            <person name="Ishikawa T."/>
            <person name="Jakt M."/>
            <person name="Kanapin A."/>
            <person name="Katoh M."/>
            <person name="Kawasawa Y."/>
            <person name="Kelso J."/>
            <person name="Kitamura H."/>
            <person name="Kitano H."/>
            <person name="Kollias G."/>
            <person name="Krishnan S.P."/>
            <person name="Kruger A."/>
            <person name="Kummerfeld S.K."/>
            <person name="Kurochkin I.V."/>
            <person name="Lareau L.F."/>
            <person name="Lazarevic D."/>
            <person name="Lipovich L."/>
            <person name="Liu J."/>
            <person name="Liuni S."/>
            <person name="McWilliam S."/>
            <person name="Madan Babu M."/>
            <person name="Madera M."/>
            <person name="Marchionni L."/>
            <person name="Matsuda H."/>
            <person name="Matsuzawa S."/>
            <person name="Miki H."/>
            <person name="Mignone F."/>
            <person name="Miyake S."/>
            <person name="Morris K."/>
            <person name="Mottagui-Tabar S."/>
            <person name="Mulder N."/>
            <person name="Nakano N."/>
            <person name="Nakauchi H."/>
            <person name="Ng P."/>
            <person name="Nilsson R."/>
            <person name="Nishiguchi S."/>
            <person name="Nishikawa S."/>
            <person name="Nori F."/>
            <person name="Ohara O."/>
            <person name="Okazaki Y."/>
            <person name="Orlando V."/>
            <person name="Pang K.C."/>
            <person name="Pavan W.J."/>
            <person name="Pavesi G."/>
            <person name="Pesole G."/>
            <person name="Petrovsky N."/>
            <person name="Piazza S."/>
            <person name="Reed J."/>
            <person name="Reid J.F."/>
            <person name="Ring B.Z."/>
            <person name="Ringwald M."/>
            <person name="Rost B."/>
            <person name="Ruan Y."/>
            <person name="Salzberg S.L."/>
            <person name="Sandelin A."/>
            <person name="Schneider C."/>
            <person name="Schoenbach C."/>
            <person name="Sekiguchi K."/>
            <person name="Semple C.A."/>
            <person name="Seno S."/>
            <person name="Sessa L."/>
            <person name="Sheng Y."/>
            <person name="Shibata Y."/>
            <person name="Shimada H."/>
            <person name="Shimada K."/>
            <person name="Silva D."/>
            <person name="Sinclair B."/>
            <person name="Sperling S."/>
            <person name="Stupka E."/>
            <person name="Sugiura K."/>
            <person name="Sultana R."/>
            <person name="Takenaka Y."/>
            <person name="Taki K."/>
            <person name="Tammoja K."/>
            <person name="Tan S.L."/>
            <person name="Tang S."/>
            <person name="Taylor M.S."/>
            <person name="Tegner J."/>
            <person name="Teichmann S.A."/>
            <person name="Ueda H.R."/>
            <person name="van Nimwegen E."/>
            <person name="Verardo R."/>
            <person name="Wei C.L."/>
            <person name="Yagi K."/>
            <person name="Yamanishi H."/>
            <person name="Zabarovsky E."/>
            <person name="Zhu S."/>
            <person name="Zimmer A."/>
            <person name="Hide W."/>
            <person name="Bult C."/>
            <person name="Grimmond S.M."/>
            <person name="Teasdale R.D."/>
            <person name="Liu E.T."/>
            <person name="Brusic V."/>
            <person name="Quackenbush J."/>
            <person name="Wahlestedt C."/>
            <person name="Mattick J.S."/>
            <person name="Hume D.A."/>
            <person name="Kai C."/>
            <person name="Sasaki D."/>
            <person name="Tomaru Y."/>
            <person name="Fukuda S."/>
            <person name="Kanamori-Katayama M."/>
            <person name="Suzuki M."/>
            <person name="Aoki J."/>
            <person name="Arakawa T."/>
            <person name="Iida J."/>
            <person name="Imamura K."/>
            <person name="Itoh M."/>
            <person name="Kato T."/>
            <person name="Kawaji H."/>
            <person name="Kawagashira N."/>
            <person name="Kawashima T."/>
            <person name="Kojima M."/>
            <person name="Kondo S."/>
            <person name="Konno H."/>
            <person name="Nakano K."/>
            <person name="Ninomiya N."/>
            <person name="Nishio T."/>
            <person name="Okada M."/>
            <person name="Plessy C."/>
            <person name="Shibata K."/>
            <person name="Shiraki T."/>
            <person name="Suzuki S."/>
            <person name="Tagami M."/>
            <person name="Waki K."/>
            <person name="Watahiki A."/>
            <person name="Okamura-Oho Y."/>
            <person name="Suzuki H."/>
            <person name="Kawai J."/>
            <person name="Hayashizaki Y."/>
        </authorList>
    </citation>
    <scope>NUCLEOTIDE SEQUENCE [LARGE SCALE MRNA] (ISOFORMS 2 AND 4)</scope>
    <source>
        <strain>C57BL/6J</strain>
        <strain>NOD</strain>
        <tissue>Brain</tissue>
    </source>
</reference>
<reference key="2">
    <citation type="journal article" date="2009" name="PLoS Biol.">
        <title>Lineage-specific biology revealed by a finished genome assembly of the mouse.</title>
        <authorList>
            <person name="Church D.M."/>
            <person name="Goodstadt L."/>
            <person name="Hillier L.W."/>
            <person name="Zody M.C."/>
            <person name="Goldstein S."/>
            <person name="She X."/>
            <person name="Bult C.J."/>
            <person name="Agarwala R."/>
            <person name="Cherry J.L."/>
            <person name="DiCuccio M."/>
            <person name="Hlavina W."/>
            <person name="Kapustin Y."/>
            <person name="Meric P."/>
            <person name="Maglott D."/>
            <person name="Birtle Z."/>
            <person name="Marques A.C."/>
            <person name="Graves T."/>
            <person name="Zhou S."/>
            <person name="Teague B."/>
            <person name="Potamousis K."/>
            <person name="Churas C."/>
            <person name="Place M."/>
            <person name="Herschleb J."/>
            <person name="Runnheim R."/>
            <person name="Forrest D."/>
            <person name="Amos-Landgraf J."/>
            <person name="Schwartz D.C."/>
            <person name="Cheng Z."/>
            <person name="Lindblad-Toh K."/>
            <person name="Eichler E.E."/>
            <person name="Ponting C.P."/>
        </authorList>
    </citation>
    <scope>NUCLEOTIDE SEQUENCE [LARGE SCALE GENOMIC DNA]</scope>
    <source>
        <strain>C57BL/6J</strain>
    </source>
</reference>
<reference key="3">
    <citation type="journal article" date="2004" name="Genome Res.">
        <title>The status, quality, and expansion of the NIH full-length cDNA project: the Mammalian Gene Collection (MGC).</title>
        <authorList>
            <consortium name="The MGC Project Team"/>
        </authorList>
    </citation>
    <scope>NUCLEOTIDE SEQUENCE [LARGE SCALE MRNA] (ISOFORM 4)</scope>
    <source>
        <tissue>Embryo</tissue>
    </source>
</reference>
<reference key="4">
    <citation type="submission" date="2005-02" db="EMBL/GenBank/DDBJ databases">
        <title>Role of mouse RREB gene in cancer susceptibility/resistance.</title>
        <authorList>
            <person name="Zhang S."/>
            <person name="Bliskovsky V."/>
            <person name="Mock B."/>
        </authorList>
    </citation>
    <scope>NUCLEOTIDE SEQUENCE [MRNA] OF 21-1700 (ISOFORM 3)</scope>
    <source>
        <strain>BALB/cJ</strain>
    </source>
</reference>
<reference key="5">
    <citation type="journal article" date="2003" name="Oncogene">
        <title>p16 INK4a gene promoter variation and differential binding of a repressor, the ras-responsive zinc-finger transcription factor, RREB.</title>
        <authorList>
            <person name="Zhang S."/>
            <person name="Qian X."/>
            <person name="Redman C."/>
            <person name="Bliskovski V."/>
            <person name="Ramsay E.S."/>
            <person name="Lowy D.R."/>
            <person name="Mock B.A."/>
        </authorList>
    </citation>
    <scope>FUNCTION</scope>
    <scope>TISSUE SPECIFICITY</scope>
</reference>
<reference key="6">
    <citation type="journal article" date="2007" name="Proc. Natl. Acad. Sci. U.S.A.">
        <title>Large-scale phosphorylation analysis of mouse liver.</title>
        <authorList>
            <person name="Villen J."/>
            <person name="Beausoleil S.A."/>
            <person name="Gerber S.A."/>
            <person name="Gygi S.P."/>
        </authorList>
    </citation>
    <scope>PHOSPHORYLATION [LARGE SCALE ANALYSIS] AT SER-1137; SER-1138; SER-1179 AND SER-1180</scope>
    <scope>IDENTIFICATION BY MASS SPECTROMETRY [LARGE SCALE ANALYSIS]</scope>
    <source>
        <tissue>Liver</tissue>
    </source>
</reference>
<reference key="7">
    <citation type="journal article" date="2010" name="Cell">
        <title>A tissue-specific atlas of mouse protein phosphorylation and expression.</title>
        <authorList>
            <person name="Huttlin E.L."/>
            <person name="Jedrychowski M.P."/>
            <person name="Elias J.E."/>
            <person name="Goswami T."/>
            <person name="Rad R."/>
            <person name="Beausoleil S.A."/>
            <person name="Villen J."/>
            <person name="Haas W."/>
            <person name="Sowa M.E."/>
            <person name="Gygi S.P."/>
        </authorList>
    </citation>
    <scope>PHOSPHORYLATION [LARGE SCALE ANALYSIS] AT SER-161; SER-970; SER-1137; SER-1138; SER-1450; SER-1452; SER-1593 AND SER-1606</scope>
    <scope>IDENTIFICATION BY MASS SPECTROMETRY [LARGE SCALE ANALYSIS]</scope>
    <source>
        <tissue>Brown adipose tissue</tissue>
        <tissue>Heart</tissue>
        <tissue>Kidney</tissue>
        <tissue>Liver</tissue>
        <tissue>Lung</tissue>
        <tissue>Pancreas</tissue>
        <tissue>Spleen</tissue>
        <tissue>Testis</tissue>
    </source>
</reference>
<reference key="8">
    <citation type="journal article" date="2016" name="PLoS Genet.">
        <title>Comparative Transcriptomic and Epigenomic Analyses Reveal New Regulators of Murine Brown Adipogenesis.</title>
        <authorList>
            <person name="Brunmeir R."/>
            <person name="Wu J."/>
            <person name="Peng X."/>
            <person name="Kim S.Y."/>
            <person name="Julien S.G."/>
            <person name="Zhang Q."/>
            <person name="Xie W."/>
            <person name="Xu F."/>
        </authorList>
    </citation>
    <scope>FUNCTION</scope>
</reference>
<organism>
    <name type="scientific">Mus musculus</name>
    <name type="common">Mouse</name>
    <dbReference type="NCBI Taxonomy" id="10090"/>
    <lineage>
        <taxon>Eukaryota</taxon>
        <taxon>Metazoa</taxon>
        <taxon>Chordata</taxon>
        <taxon>Craniata</taxon>
        <taxon>Vertebrata</taxon>
        <taxon>Euteleostomi</taxon>
        <taxon>Mammalia</taxon>
        <taxon>Eutheria</taxon>
        <taxon>Euarchontoglires</taxon>
        <taxon>Glires</taxon>
        <taxon>Rodentia</taxon>
        <taxon>Myomorpha</taxon>
        <taxon>Muroidea</taxon>
        <taxon>Muridae</taxon>
        <taxon>Murinae</taxon>
        <taxon>Mus</taxon>
        <taxon>Mus</taxon>
    </lineage>
</organism>
<evidence type="ECO:0000250" key="1"/>
<evidence type="ECO:0000250" key="2">
    <source>
        <dbReference type="UniProtKB" id="Q92766"/>
    </source>
</evidence>
<evidence type="ECO:0000255" key="3">
    <source>
        <dbReference type="PROSITE-ProRule" id="PRU00042"/>
    </source>
</evidence>
<evidence type="ECO:0000256" key="4">
    <source>
        <dbReference type="SAM" id="MobiDB-lite"/>
    </source>
</evidence>
<evidence type="ECO:0000269" key="5">
    <source>
    </source>
</evidence>
<evidence type="ECO:0000269" key="6">
    <source>
    </source>
</evidence>
<evidence type="ECO:0000303" key="7">
    <source>
    </source>
</evidence>
<evidence type="ECO:0000303" key="8">
    <source>
    </source>
</evidence>
<evidence type="ECO:0000303" key="9">
    <source ref="4"/>
</evidence>
<evidence type="ECO:0000305" key="10"/>
<evidence type="ECO:0007744" key="11">
    <source>
    </source>
</evidence>
<evidence type="ECO:0007744" key="12">
    <source>
    </source>
</evidence>
<proteinExistence type="evidence at protein level"/>
<keyword id="KW-0010">Activator</keyword>
<keyword id="KW-0025">Alternative splicing</keyword>
<keyword id="KW-0238">DNA-binding</keyword>
<keyword id="KW-1017">Isopeptide bond</keyword>
<keyword id="KW-0479">Metal-binding</keyword>
<keyword id="KW-0539">Nucleus</keyword>
<keyword id="KW-0597">Phosphoprotein</keyword>
<keyword id="KW-1185">Reference proteome</keyword>
<keyword id="KW-0677">Repeat</keyword>
<keyword id="KW-0678">Repressor</keyword>
<keyword id="KW-0804">Transcription</keyword>
<keyword id="KW-0805">Transcription regulation</keyword>
<keyword id="KW-0832">Ubl conjugation</keyword>
<keyword id="KW-0862">Zinc</keyword>
<keyword id="KW-0863">Zinc-finger</keyword>
<protein>
    <recommendedName>
        <fullName>Ras-responsive element-binding protein 1</fullName>
        <shortName>RREB-1</shortName>
    </recommendedName>
    <alternativeName>
        <fullName>RAS-responsive zinc finger transcription factor RREB</fullName>
    </alternativeName>
</protein>
<feature type="chain" id="PRO_0000295155" description="Ras-responsive element-binding protein 1">
    <location>
        <begin position="1"/>
        <end position="1700"/>
    </location>
</feature>
<feature type="zinc finger region" description="C2H2-type 1" evidence="3">
    <location>
        <begin position="66"/>
        <end position="88"/>
    </location>
</feature>
<feature type="zinc finger region" description="C2H2-type 2" evidence="3">
    <location>
        <begin position="97"/>
        <end position="119"/>
    </location>
</feature>
<feature type="zinc finger region" description="C2H2-type 3" evidence="3">
    <location>
        <begin position="125"/>
        <end position="147"/>
    </location>
</feature>
<feature type="zinc finger region" description="C2H2-type 4" evidence="3">
    <location>
        <begin position="206"/>
        <end position="228"/>
    </location>
</feature>
<feature type="zinc finger region" description="C2H2-type 5" evidence="3">
    <location>
        <begin position="233"/>
        <end position="256"/>
    </location>
</feature>
<feature type="zinc finger region" description="C2H2-type 6" evidence="3">
    <location>
        <begin position="314"/>
        <end position="336"/>
    </location>
</feature>
<feature type="zinc finger region" description="C2H2-type 7" evidence="3">
    <location>
        <begin position="641"/>
        <end position="663"/>
    </location>
</feature>
<feature type="zinc finger region" description="C2H2-type 8" evidence="3">
    <location>
        <begin position="669"/>
        <end position="691"/>
    </location>
</feature>
<feature type="zinc finger region" description="C2H2-type 9" evidence="3">
    <location>
        <begin position="697"/>
        <end position="720"/>
    </location>
</feature>
<feature type="zinc finger region" description="C2H2-type 10" evidence="3">
    <location>
        <begin position="751"/>
        <end position="782"/>
    </location>
</feature>
<feature type="zinc finger region" description="C2H2-type 11" evidence="3">
    <location>
        <begin position="788"/>
        <end position="813"/>
    </location>
</feature>
<feature type="zinc finger region" description="C2H2-type 12" evidence="3">
    <location>
        <begin position="1251"/>
        <end position="1273"/>
    </location>
</feature>
<feature type="zinc finger region" description="C2H2-type 13" evidence="3">
    <location>
        <begin position="1400"/>
        <end position="1422"/>
    </location>
</feature>
<feature type="zinc finger region" description="C2H2-type 14" evidence="3">
    <location>
        <begin position="1520"/>
        <end position="1542"/>
    </location>
</feature>
<feature type="zinc finger region" description="C2H2-type 15" evidence="3">
    <location>
        <begin position="1548"/>
        <end position="1570"/>
    </location>
</feature>
<feature type="region of interest" description="Disordered" evidence="4">
    <location>
        <begin position="31"/>
        <end position="63"/>
    </location>
</feature>
<feature type="region of interest" description="Disordered" evidence="4">
    <location>
        <begin position="146"/>
        <end position="195"/>
    </location>
</feature>
<feature type="region of interest" description="Disordered" evidence="4">
    <location>
        <begin position="939"/>
        <end position="991"/>
    </location>
</feature>
<feature type="region of interest" description="Disordered" evidence="4">
    <location>
        <begin position="1092"/>
        <end position="1177"/>
    </location>
</feature>
<feature type="region of interest" description="Disordered" evidence="4">
    <location>
        <begin position="1195"/>
        <end position="1235"/>
    </location>
</feature>
<feature type="region of interest" description="Disordered" evidence="4">
    <location>
        <begin position="1273"/>
        <end position="1368"/>
    </location>
</feature>
<feature type="region of interest" description="Disordered" evidence="4">
    <location>
        <begin position="1383"/>
        <end position="1521"/>
    </location>
</feature>
<feature type="region of interest" description="Disordered" evidence="4">
    <location>
        <begin position="1564"/>
        <end position="1670"/>
    </location>
</feature>
<feature type="compositionally biased region" description="Basic residues" evidence="4">
    <location>
        <begin position="163"/>
        <end position="174"/>
    </location>
</feature>
<feature type="compositionally biased region" description="Basic and acidic residues" evidence="4">
    <location>
        <begin position="184"/>
        <end position="195"/>
    </location>
</feature>
<feature type="compositionally biased region" description="Basic and acidic residues" evidence="4">
    <location>
        <begin position="944"/>
        <end position="961"/>
    </location>
</feature>
<feature type="compositionally biased region" description="Polar residues" evidence="4">
    <location>
        <begin position="1097"/>
        <end position="1111"/>
    </location>
</feature>
<feature type="compositionally biased region" description="Low complexity" evidence="4">
    <location>
        <begin position="1137"/>
        <end position="1146"/>
    </location>
</feature>
<feature type="compositionally biased region" description="Basic residues" evidence="4">
    <location>
        <begin position="1155"/>
        <end position="1165"/>
    </location>
</feature>
<feature type="compositionally biased region" description="Low complexity" evidence="4">
    <location>
        <begin position="1273"/>
        <end position="1285"/>
    </location>
</feature>
<feature type="compositionally biased region" description="Acidic residues" evidence="4">
    <location>
        <begin position="1327"/>
        <end position="1346"/>
    </location>
</feature>
<feature type="compositionally biased region" description="Basic and acidic residues" evidence="4">
    <location>
        <begin position="1492"/>
        <end position="1507"/>
    </location>
</feature>
<feature type="compositionally biased region" description="Basic residues" evidence="4">
    <location>
        <begin position="1564"/>
        <end position="1580"/>
    </location>
</feature>
<feature type="compositionally biased region" description="Low complexity" evidence="4">
    <location>
        <begin position="1645"/>
        <end position="1660"/>
    </location>
</feature>
<feature type="modified residue" description="Phosphoserine" evidence="2">
    <location>
        <position position="36"/>
    </location>
</feature>
<feature type="modified residue" description="Phosphoserine" evidence="2">
    <location>
        <position position="42"/>
    </location>
</feature>
<feature type="modified residue" description="Phosphoserine" evidence="12">
    <location>
        <position position="161"/>
    </location>
</feature>
<feature type="modified residue" description="Phosphoserine" evidence="2">
    <location>
        <position position="175"/>
    </location>
</feature>
<feature type="modified residue" description="Phosphoserine" evidence="2">
    <location>
        <position position="180"/>
    </location>
</feature>
<feature type="modified residue" description="Phosphoserine" evidence="2">
    <location>
        <position position="229"/>
    </location>
</feature>
<feature type="modified residue" description="Phosphoserine" evidence="12">
    <location>
        <position position="970"/>
    </location>
</feature>
<feature type="modified residue" description="Phosphoserine" evidence="2">
    <location>
        <position position="1125"/>
    </location>
</feature>
<feature type="modified residue" description="Phosphoserine" evidence="11 12">
    <location>
        <position position="1137"/>
    </location>
</feature>
<feature type="modified residue" description="Phosphoserine" evidence="11 12">
    <location>
        <position position="1138"/>
    </location>
</feature>
<feature type="modified residue" description="Phosphoserine" evidence="2">
    <location>
        <position position="1172"/>
    </location>
</feature>
<feature type="modified residue" description="Phosphoserine" evidence="11">
    <location>
        <position position="1179"/>
    </location>
</feature>
<feature type="modified residue" description="Phosphoserine" evidence="11">
    <location>
        <position position="1180"/>
    </location>
</feature>
<feature type="modified residue" description="Phosphoserine" evidence="2">
    <location>
        <position position="1230"/>
    </location>
</feature>
<feature type="modified residue" description="Phosphoserine" evidence="12">
    <location>
        <position position="1450"/>
    </location>
</feature>
<feature type="modified residue" description="Phosphoserine" evidence="12">
    <location>
        <position position="1452"/>
    </location>
</feature>
<feature type="modified residue" description="Phosphoserine" evidence="12">
    <location>
        <position position="1593"/>
    </location>
</feature>
<feature type="modified residue" description="Phosphoserine" evidence="12">
    <location>
        <position position="1606"/>
    </location>
</feature>
<feature type="modified residue" description="Phosphoserine" evidence="2">
    <location>
        <position position="1667"/>
    </location>
</feature>
<feature type="cross-link" description="Glycyl lysine isopeptide (Lys-Gly) (interchain with G-Cter in SUMO2)" evidence="2">
    <location>
        <position position="433"/>
    </location>
</feature>
<feature type="cross-link" description="Glycyl lysine isopeptide (Lys-Gly) (interchain with G-Cter in SUMO2)" evidence="2">
    <location>
        <position position="500"/>
    </location>
</feature>
<feature type="cross-link" description="Glycyl lysine isopeptide (Lys-Gly) (interchain with G-Cter in SUMO2)" evidence="2">
    <location>
        <position position="549"/>
    </location>
</feature>
<feature type="cross-link" description="Glycyl lysine isopeptide (Lys-Gly) (interchain with G-Cter in SUMO2)" evidence="2">
    <location>
        <position position="564"/>
    </location>
</feature>
<feature type="cross-link" description="Glycyl lysine isopeptide (Lys-Gly) (interchain with G-Cter in SUMO2)" evidence="2">
    <location>
        <position position="591"/>
    </location>
</feature>
<feature type="cross-link" description="Glycyl lysine isopeptide (Lys-Gly) (interchain with G-Cter in SUMO2)" evidence="2">
    <location>
        <position position="611"/>
    </location>
</feature>
<feature type="cross-link" description="Glycyl lysine isopeptide (Lys-Gly) (interchain with G-Cter in SUMO1); alternate" evidence="2">
    <location>
        <position position="613"/>
    </location>
</feature>
<feature type="cross-link" description="Glycyl lysine isopeptide (Lys-Gly) (interchain with G-Cter in SUMO2); alternate" evidence="2">
    <location>
        <position position="613"/>
    </location>
</feature>
<feature type="cross-link" description="Glycyl lysine isopeptide (Lys-Gly) (interchain with G-Cter in SUMO2)" evidence="2">
    <location>
        <position position="622"/>
    </location>
</feature>
<feature type="cross-link" description="Glycyl lysine isopeptide (Lys-Gly) (interchain with G-Cter in SUMO2)" evidence="2">
    <location>
        <position position="855"/>
    </location>
</feature>
<feature type="cross-link" description="Glycyl lysine isopeptide (Lys-Gly) (interchain with G-Cter in SUMO2)" evidence="2">
    <location>
        <position position="883"/>
    </location>
</feature>
<feature type="cross-link" description="Glycyl lysine isopeptide (Lys-Gly) (interchain with G-Cter in SUMO2)" evidence="2">
    <location>
        <position position="911"/>
    </location>
</feature>
<feature type="splice variant" id="VSP_026765" description="In isoform 2." evidence="8">
    <location>
        <begin position="1"/>
        <end position="82"/>
    </location>
</feature>
<feature type="splice variant" id="VSP_026766" description="In isoform 3." evidence="9">
    <original>T</original>
    <variation>TGQKPFPCQKCDAFFSTKSNCERHQLRKHGVTTCSLRRNGLIPPKESDVGSHDST</variation>
    <location>
        <position position="1274"/>
    </location>
</feature>
<feature type="splice variant" id="VSP_026767" description="In isoform 4." evidence="7 8">
    <original>DSQSDTDTLTTPGEVLD</original>
    <variation>GKKALTAHQAVSLERKE</variation>
    <location>
        <begin position="1275"/>
        <end position="1291"/>
    </location>
</feature>
<feature type="splice variant" id="VSP_026768" description="In isoform 4." evidence="7 8">
    <location>
        <begin position="1292"/>
        <end position="1700"/>
    </location>
</feature>
<feature type="sequence conflict" description="In Ref. 1; BAE28051." evidence="10" ref="1">
    <original>D</original>
    <variation>G</variation>
    <location>
        <position position="834"/>
    </location>
</feature>
<feature type="sequence conflict" description="In Ref. 4; AAH80680." evidence="10" ref="4">
    <original>I</original>
    <variation>T</variation>
    <location>
        <position position="1113"/>
    </location>
</feature>
<feature type="sequence conflict" description="In Ref. 1; BAE28051." evidence="10" ref="1">
    <original>D</original>
    <variation>G</variation>
    <location>
        <position position="1178"/>
    </location>
</feature>
<name>RREB1_MOUSE</name>
<gene>
    <name type="primary">Rreb1</name>
</gene>
<sequence length="1700" mass="184154">MTSNSPIGLEGSDLSSINTMMSAVMSVASVTENGGSPQGIKSPMKPPGPNRIGRRNQETKEEKSSYNCPLCEKICTTQHQLTMHIRQHNTDTGGADHACSICGKSLSSASSLDRHMLVHSGERPYKCTVCGQSFTTNGNMHRHMKIHEKDTNSTTAAAPPSPLKRRRLSSKRKLSHDAESEDPGPAKKMVEDGQSGDLDKMSDEIFHCPVCFKEFVCKYELETHMETHSDNPLRCDICCVTFRTHRGLLRHNALVHKQLPRDAMGRPFIQNNPSIPAGFHDLGFTDFSCRKFPRISQAWCETNLRRCISEQHRFVCDTCDKAFPMLSSLILHRQSHIPADQGREKLQTKTLAAESLEQKAFLALLGLQHTKDVKPAPAEELLPDDNQAIQLQTLKYQLPQEPGCPTVLSVSPLDAASLGGSLTVLPATKENMKHLSLQPFQKGFIIQPDSSIVVKPISGESAIELADIQQILKMAASAPPQISLPPLSKAPATPLQAIFKHMPPLKPKPLVTPRTVVAASTPPPLINAQQASPGCISPSLPPQSLKFLKGSVEAVSNVHLLQSKSGIQPSTTTQLFLQQAGVELPGQPEMKTQLEQESIIEALLPLNMEAKIKQEITEGDLKAIMTGPSGKKTPAMRKVLYPCRFCNQVFAFSGVLRAHVRSHLGISPYQCNICDYIAADKAALIRHIRTHSGERPYICKICHYPFTVKANCERHLRKKHLKATRKDIEKNIEYVSSPTAELVDAFCAPETVCRLCGEDLKHYRALRIHMRTHCSRGLGGCHKGRKPFECKECNAPFVAKRNCIHHILKQHLHVPEKDIESYVLATNSGLGPADTPTDAASRGEEGSCVTFAECKPLATFLEPQNGFLHSSPTQPLPSHISVKLEPASSFAMDFNEPLDFSQKGLALVQVKQENVSSLLTSSSSSALYDCSMEPIDLSIPKSVKKGDKDTVVPSDAKKPEPEAGQAEPLSPRPPPCPTLSVTVEPKGSLETPTGTVVAVTTAAKLEPHTQPLQGSVQLAVPIYSPALVSNTPLLGNSAALLNNPALLRPLRPKPPLLLPKPSMTEELPPLASIAQIISSVSSAPTLLKTKVADPGPSITSSNTVATDSPGSSIPKAAATPTDTTSSKESSEPPPAASSPEEALPTEQGPAATSSSRKRGRKRGLRNRPLPNSSAVDLDSSGEFASIEKMLATTDTNKFSPFLQTAEDDTQEEVAGAPADQHGPADEEQGSPAEDRLLRAKRNSYANCLQKINCPHCPRVFPWASSLQRHMLTHTDSQSDTDTLTTPGEVLDLTAQAKEQPPAEGASEISPASQDLAIKEAKAAAAPSEEEEEKETEENPEPEEECRVEESTGAADAPEEDTASNQSLDLDFATKLMDFKLAESEAGSVDSQGPAQQEPKHACDTCGKNFKFLGTLSRHKKAHSCQEPKEEEAAAPSLENEGVGRAVEGPSPSPEPEEKPAESLAIDPTPGTREASVAKQNEETEGPTDGEGTAEKRGDGDKRPKTDSPKSMASKADKRKKVCSVCNKRFWSLQDLTRHMRSHTGERPYKCQTCERTFTLKHSLVRHQRIHQKARHSKHHGKDSDKDERAEEDSEDESTHSATNPASENEAESAPSTSNHVAVTRSRKESLSTSGKECSPEERAAAEQAAEPSAPKEQASPGETDPQSPAAIVQDLLELCGKRPAPILAATDGASQLLGME</sequence>
<accession>Q3UH06</accession>
<accession>B8JJE2</accession>
<accession>B8JJE3</accession>
<accession>Q3TB97</accession>
<accession>Q4ZE88</accession>
<accession>Q66JZ8</accession>
<comment type="function">
    <text evidence="2 5 6">Transcription factor that binds specifically to the RAS-responsive elements (RRE) of gene promoters (PubMed:12700664). Represses the angiotensinogen gene (By similarity). Negatively regulates the transcriptional activity of AR (By similarity). Potentiates the transcriptional activity of NEUROD1 (By similarity). Binds specifically to the allelic variant of the CDKN2A promoter present in Balb/c mice, which leads to a down-regulation of CDKN2A expression in this strain, and, as a consequence, to an elevated susceptibility to pristane-induced tumors (PubMed:12700664). Promotes brown adipocyte differentiation (PubMed:27923061). May be involved in Ras/Raf-mediated cell differentiation by enhancing calcitonin expression (By similarity).</text>
</comment>
<comment type="subunit">
    <text evidence="2">Interacts with NEUROD1 (By similarity). Interacts with AR (By similarity).</text>
</comment>
<comment type="subcellular location">
    <subcellularLocation>
        <location evidence="1">Nucleus speckle</location>
    </subcellularLocation>
</comment>
<comment type="alternative products">
    <event type="alternative splicing"/>
    <isoform>
        <id>Q3UH06-1</id>
        <name>1</name>
        <sequence type="displayed"/>
    </isoform>
    <isoform>
        <id>Q3UH06-2</id>
        <name>2</name>
        <sequence type="described" ref="VSP_026765"/>
    </isoform>
    <isoform>
        <id>Q3UH06-3</id>
        <name>3</name>
        <sequence type="described" ref="VSP_026766"/>
    </isoform>
    <isoform>
        <id>Q3UH06-4</id>
        <name>4</name>
        <sequence type="described" ref="VSP_026767 VSP_026768"/>
    </isoform>
</comment>
<comment type="tissue specificity">
    <text evidence="5">Expressed in splenic B-cells.</text>
</comment>
<comment type="similarity">
    <text evidence="10">Belongs to the krueppel C2H2-type zinc-finger protein family.</text>
</comment>